<evidence type="ECO:0000250" key="1"/>
<evidence type="ECO:0000255" key="2">
    <source>
        <dbReference type="HAMAP-Rule" id="MF_00138"/>
    </source>
</evidence>
<proteinExistence type="inferred from homology"/>
<name>PUR2_PSEPK</name>
<organism>
    <name type="scientific">Pseudomonas putida (strain ATCC 47054 / DSM 6125 / CFBP 8728 / NCIMB 11950 / KT2440)</name>
    <dbReference type="NCBI Taxonomy" id="160488"/>
    <lineage>
        <taxon>Bacteria</taxon>
        <taxon>Pseudomonadati</taxon>
        <taxon>Pseudomonadota</taxon>
        <taxon>Gammaproteobacteria</taxon>
        <taxon>Pseudomonadales</taxon>
        <taxon>Pseudomonadaceae</taxon>
        <taxon>Pseudomonas</taxon>
    </lineage>
</organism>
<accession>Q88DK2</accession>
<gene>
    <name evidence="2" type="primary">purD</name>
    <name type="ordered locus">PP_4823</name>
</gene>
<feature type="chain" id="PRO_0000151470" description="Phosphoribosylamine--glycine ligase">
    <location>
        <begin position="1"/>
        <end position="431"/>
    </location>
</feature>
<feature type="domain" description="ATP-grasp" evidence="2">
    <location>
        <begin position="108"/>
        <end position="315"/>
    </location>
</feature>
<feature type="binding site" evidence="2">
    <location>
        <begin position="134"/>
        <end position="195"/>
    </location>
    <ligand>
        <name>ATP</name>
        <dbReference type="ChEBI" id="CHEBI:30616"/>
    </ligand>
</feature>
<feature type="binding site" evidence="2">
    <location>
        <position position="285"/>
    </location>
    <ligand>
        <name>Mg(2+)</name>
        <dbReference type="ChEBI" id="CHEBI:18420"/>
    </ligand>
</feature>
<feature type="binding site" evidence="2">
    <location>
        <position position="287"/>
    </location>
    <ligand>
        <name>Mg(2+)</name>
        <dbReference type="ChEBI" id="CHEBI:18420"/>
    </ligand>
</feature>
<sequence length="431" mass="45837">MKVLIIGSGGREHALAWKVAQDPRVEKVFVAPGNAGTAIEAKCENVAIDVCALEQLADFAEKNVDLTIVGPEAPLVIGVVDLFRSRGLDCFGPTKGAAQLEGSKAFTKDFLARHEIPTADYQNFTEIEPALAYLQEKGAPIVIKADGLAAGKGVIVAMTLEEAEAAVRDMLAGNAFGEAGSRVVIEEFLDGEEASFIVMVDGHNVLPMATSQDHKRVGDQDTGPNTGGMGAYSPAPVVTADVHQRVMDQVIWPTVRGMAEEGNVYTGFLYAGLMIDKAGNPKVIEFNCRFGDPETQPVMLRLESSLVLLVEAAFAKALDKVEAQWDPRPSLGVVLAAGGYPGDYAKGDVINGLDAAAKIEGKVFHAGTALKDGKVTTNGGRVLCATAMGSTVADAQQQAYRLAKEVSWNGSFYRSDIGYRAIARERGEHQQ</sequence>
<dbReference type="EC" id="6.3.4.13" evidence="2"/>
<dbReference type="EMBL" id="AE015451">
    <property type="protein sequence ID" value="AAN70392.1"/>
    <property type="molecule type" value="Genomic_DNA"/>
</dbReference>
<dbReference type="RefSeq" id="NP_746928.1">
    <property type="nucleotide sequence ID" value="NC_002947.4"/>
</dbReference>
<dbReference type="RefSeq" id="WP_010955432.1">
    <property type="nucleotide sequence ID" value="NZ_CP169744.1"/>
</dbReference>
<dbReference type="SMR" id="Q88DK2"/>
<dbReference type="STRING" id="160488.PP_4823"/>
<dbReference type="PaxDb" id="160488-PP_4823"/>
<dbReference type="KEGG" id="ppu:PP_4823"/>
<dbReference type="PATRIC" id="fig|160488.4.peg.5147"/>
<dbReference type="eggNOG" id="COG0151">
    <property type="taxonomic scope" value="Bacteria"/>
</dbReference>
<dbReference type="HOGENOM" id="CLU_027420_3_1_6"/>
<dbReference type="OrthoDB" id="9807240at2"/>
<dbReference type="PhylomeDB" id="Q88DK2"/>
<dbReference type="BioCyc" id="PPUT160488:G1G01-5160-MONOMER"/>
<dbReference type="UniPathway" id="UPA00074">
    <property type="reaction ID" value="UER00125"/>
</dbReference>
<dbReference type="Proteomes" id="UP000000556">
    <property type="component" value="Chromosome"/>
</dbReference>
<dbReference type="GO" id="GO:0005524">
    <property type="term" value="F:ATP binding"/>
    <property type="evidence" value="ECO:0007669"/>
    <property type="project" value="UniProtKB-KW"/>
</dbReference>
<dbReference type="GO" id="GO:0046872">
    <property type="term" value="F:metal ion binding"/>
    <property type="evidence" value="ECO:0007669"/>
    <property type="project" value="UniProtKB-KW"/>
</dbReference>
<dbReference type="GO" id="GO:0004637">
    <property type="term" value="F:phosphoribosylamine-glycine ligase activity"/>
    <property type="evidence" value="ECO:0007669"/>
    <property type="project" value="UniProtKB-UniRule"/>
</dbReference>
<dbReference type="GO" id="GO:0006189">
    <property type="term" value="P:'de novo' IMP biosynthetic process"/>
    <property type="evidence" value="ECO:0007669"/>
    <property type="project" value="UniProtKB-UniRule"/>
</dbReference>
<dbReference type="GO" id="GO:0009113">
    <property type="term" value="P:purine nucleobase biosynthetic process"/>
    <property type="evidence" value="ECO:0007669"/>
    <property type="project" value="InterPro"/>
</dbReference>
<dbReference type="FunFam" id="3.30.470.20:FF:000031">
    <property type="entry name" value="Phosphoribosylamine--glycine ligase"/>
    <property type="match status" value="1"/>
</dbReference>
<dbReference type="FunFam" id="3.40.50.20:FF:000006">
    <property type="entry name" value="Phosphoribosylamine--glycine ligase, chloroplastic"/>
    <property type="match status" value="1"/>
</dbReference>
<dbReference type="FunFam" id="3.30.1490.20:FF:000006">
    <property type="entry name" value="phosphoribosylamine--glycine ligase, chloroplastic-like"/>
    <property type="match status" value="1"/>
</dbReference>
<dbReference type="FunFam" id="3.90.600.10:FF:000001">
    <property type="entry name" value="Trifunctional purine biosynthetic protein adenosine-3"/>
    <property type="match status" value="1"/>
</dbReference>
<dbReference type="Gene3D" id="3.40.50.20">
    <property type="match status" value="1"/>
</dbReference>
<dbReference type="Gene3D" id="3.30.1490.20">
    <property type="entry name" value="ATP-grasp fold, A domain"/>
    <property type="match status" value="1"/>
</dbReference>
<dbReference type="Gene3D" id="3.30.470.20">
    <property type="entry name" value="ATP-grasp fold, B domain"/>
    <property type="match status" value="1"/>
</dbReference>
<dbReference type="Gene3D" id="3.90.600.10">
    <property type="entry name" value="Phosphoribosylglycinamide synthetase, C-terminal domain"/>
    <property type="match status" value="1"/>
</dbReference>
<dbReference type="HAMAP" id="MF_00138">
    <property type="entry name" value="GARS"/>
    <property type="match status" value="1"/>
</dbReference>
<dbReference type="InterPro" id="IPR011761">
    <property type="entry name" value="ATP-grasp"/>
</dbReference>
<dbReference type="InterPro" id="IPR013815">
    <property type="entry name" value="ATP_grasp_subdomain_1"/>
</dbReference>
<dbReference type="InterPro" id="IPR016185">
    <property type="entry name" value="PreATP-grasp_dom_sf"/>
</dbReference>
<dbReference type="InterPro" id="IPR020561">
    <property type="entry name" value="PRibGlycinamid_synth_ATP-grasp"/>
</dbReference>
<dbReference type="InterPro" id="IPR000115">
    <property type="entry name" value="PRibGlycinamide_synth"/>
</dbReference>
<dbReference type="InterPro" id="IPR020560">
    <property type="entry name" value="PRibGlycinamide_synth_C-dom"/>
</dbReference>
<dbReference type="InterPro" id="IPR037123">
    <property type="entry name" value="PRibGlycinamide_synth_C_sf"/>
</dbReference>
<dbReference type="InterPro" id="IPR020559">
    <property type="entry name" value="PRibGlycinamide_synth_CS"/>
</dbReference>
<dbReference type="InterPro" id="IPR020562">
    <property type="entry name" value="PRibGlycinamide_synth_N"/>
</dbReference>
<dbReference type="InterPro" id="IPR011054">
    <property type="entry name" value="Rudment_hybrid_motif"/>
</dbReference>
<dbReference type="NCBIfam" id="TIGR00877">
    <property type="entry name" value="purD"/>
    <property type="match status" value="1"/>
</dbReference>
<dbReference type="PANTHER" id="PTHR43472">
    <property type="entry name" value="PHOSPHORIBOSYLAMINE--GLYCINE LIGASE"/>
    <property type="match status" value="1"/>
</dbReference>
<dbReference type="PANTHER" id="PTHR43472:SF1">
    <property type="entry name" value="PHOSPHORIBOSYLAMINE--GLYCINE LIGASE, CHLOROPLASTIC"/>
    <property type="match status" value="1"/>
</dbReference>
<dbReference type="Pfam" id="PF01071">
    <property type="entry name" value="GARS_A"/>
    <property type="match status" value="1"/>
</dbReference>
<dbReference type="Pfam" id="PF02843">
    <property type="entry name" value="GARS_C"/>
    <property type="match status" value="1"/>
</dbReference>
<dbReference type="Pfam" id="PF02844">
    <property type="entry name" value="GARS_N"/>
    <property type="match status" value="1"/>
</dbReference>
<dbReference type="SMART" id="SM01209">
    <property type="entry name" value="GARS_A"/>
    <property type="match status" value="1"/>
</dbReference>
<dbReference type="SMART" id="SM01210">
    <property type="entry name" value="GARS_C"/>
    <property type="match status" value="1"/>
</dbReference>
<dbReference type="SUPFAM" id="SSF56059">
    <property type="entry name" value="Glutathione synthetase ATP-binding domain-like"/>
    <property type="match status" value="1"/>
</dbReference>
<dbReference type="SUPFAM" id="SSF52440">
    <property type="entry name" value="PreATP-grasp domain"/>
    <property type="match status" value="1"/>
</dbReference>
<dbReference type="SUPFAM" id="SSF51246">
    <property type="entry name" value="Rudiment single hybrid motif"/>
    <property type="match status" value="1"/>
</dbReference>
<dbReference type="PROSITE" id="PS50975">
    <property type="entry name" value="ATP_GRASP"/>
    <property type="match status" value="1"/>
</dbReference>
<dbReference type="PROSITE" id="PS00184">
    <property type="entry name" value="GARS"/>
    <property type="match status" value="1"/>
</dbReference>
<reference key="1">
    <citation type="journal article" date="2002" name="Environ. Microbiol.">
        <title>Complete genome sequence and comparative analysis of the metabolically versatile Pseudomonas putida KT2440.</title>
        <authorList>
            <person name="Nelson K.E."/>
            <person name="Weinel C."/>
            <person name="Paulsen I.T."/>
            <person name="Dodson R.J."/>
            <person name="Hilbert H."/>
            <person name="Martins dos Santos V.A.P."/>
            <person name="Fouts D.E."/>
            <person name="Gill S.R."/>
            <person name="Pop M."/>
            <person name="Holmes M."/>
            <person name="Brinkac L.M."/>
            <person name="Beanan M.J."/>
            <person name="DeBoy R.T."/>
            <person name="Daugherty S.C."/>
            <person name="Kolonay J.F."/>
            <person name="Madupu R."/>
            <person name="Nelson W.C."/>
            <person name="White O."/>
            <person name="Peterson J.D."/>
            <person name="Khouri H.M."/>
            <person name="Hance I."/>
            <person name="Chris Lee P."/>
            <person name="Holtzapple E.K."/>
            <person name="Scanlan D."/>
            <person name="Tran K."/>
            <person name="Moazzez A."/>
            <person name="Utterback T.R."/>
            <person name="Rizzo M."/>
            <person name="Lee K."/>
            <person name="Kosack D."/>
            <person name="Moestl D."/>
            <person name="Wedler H."/>
            <person name="Lauber J."/>
            <person name="Stjepandic D."/>
            <person name="Hoheisel J."/>
            <person name="Straetz M."/>
            <person name="Heim S."/>
            <person name="Kiewitz C."/>
            <person name="Eisen J.A."/>
            <person name="Timmis K.N."/>
            <person name="Duesterhoeft A."/>
            <person name="Tuemmler B."/>
            <person name="Fraser C.M."/>
        </authorList>
    </citation>
    <scope>NUCLEOTIDE SEQUENCE [LARGE SCALE GENOMIC DNA]</scope>
    <source>
        <strain>ATCC 47054 / DSM 6125 / CFBP 8728 / NCIMB 11950 / KT2440</strain>
    </source>
</reference>
<keyword id="KW-0067">ATP-binding</keyword>
<keyword id="KW-0436">Ligase</keyword>
<keyword id="KW-0460">Magnesium</keyword>
<keyword id="KW-0464">Manganese</keyword>
<keyword id="KW-0479">Metal-binding</keyword>
<keyword id="KW-0547">Nucleotide-binding</keyword>
<keyword id="KW-0658">Purine biosynthesis</keyword>
<keyword id="KW-1185">Reference proteome</keyword>
<comment type="catalytic activity">
    <reaction evidence="2">
        <text>5-phospho-beta-D-ribosylamine + glycine + ATP = N(1)-(5-phospho-beta-D-ribosyl)glycinamide + ADP + phosphate + H(+)</text>
        <dbReference type="Rhea" id="RHEA:17453"/>
        <dbReference type="ChEBI" id="CHEBI:15378"/>
        <dbReference type="ChEBI" id="CHEBI:30616"/>
        <dbReference type="ChEBI" id="CHEBI:43474"/>
        <dbReference type="ChEBI" id="CHEBI:57305"/>
        <dbReference type="ChEBI" id="CHEBI:58681"/>
        <dbReference type="ChEBI" id="CHEBI:143788"/>
        <dbReference type="ChEBI" id="CHEBI:456216"/>
        <dbReference type="EC" id="6.3.4.13"/>
    </reaction>
</comment>
<comment type="cofactor">
    <cofactor evidence="1">
        <name>Mg(2+)</name>
        <dbReference type="ChEBI" id="CHEBI:18420"/>
    </cofactor>
    <cofactor evidence="1">
        <name>Mn(2+)</name>
        <dbReference type="ChEBI" id="CHEBI:29035"/>
    </cofactor>
    <text evidence="1">Binds 1 Mg(2+) or Mn(2+) ion per subunit.</text>
</comment>
<comment type="pathway">
    <text evidence="2">Purine metabolism; IMP biosynthesis via de novo pathway; N(1)-(5-phospho-D-ribosyl)glycinamide from 5-phospho-alpha-D-ribose 1-diphosphate: step 2/2.</text>
</comment>
<comment type="similarity">
    <text evidence="2">Belongs to the GARS family.</text>
</comment>
<protein>
    <recommendedName>
        <fullName evidence="2">Phosphoribosylamine--glycine ligase</fullName>
        <ecNumber evidence="2">6.3.4.13</ecNumber>
    </recommendedName>
    <alternativeName>
        <fullName evidence="2">GARS</fullName>
    </alternativeName>
    <alternativeName>
        <fullName evidence="2">Glycinamide ribonucleotide synthetase</fullName>
    </alternativeName>
    <alternativeName>
        <fullName evidence="2">Phosphoribosylglycinamide synthetase</fullName>
    </alternativeName>
</protein>